<accession>Q722D2</accession>
<dbReference type="EC" id="1.6.5.-" evidence="1"/>
<dbReference type="EC" id="1.7.1.17" evidence="1"/>
<dbReference type="EMBL" id="AE017262">
    <property type="protein sequence ID" value="AAT03582.1"/>
    <property type="molecule type" value="Genomic_DNA"/>
</dbReference>
<dbReference type="RefSeq" id="WP_003727162.1">
    <property type="nucleotide sequence ID" value="NC_002973.6"/>
</dbReference>
<dbReference type="SMR" id="Q722D2"/>
<dbReference type="KEGG" id="lmf:LMOf2365_0802"/>
<dbReference type="HOGENOM" id="CLU_088964_3_1_9"/>
<dbReference type="GO" id="GO:0050446">
    <property type="term" value="F:azobenzene reductase activity"/>
    <property type="evidence" value="ECO:0000250"/>
    <property type="project" value="GO_Central"/>
</dbReference>
<dbReference type="GO" id="GO:0009055">
    <property type="term" value="F:electron transfer activity"/>
    <property type="evidence" value="ECO:0007669"/>
    <property type="project" value="UniProtKB-UniRule"/>
</dbReference>
<dbReference type="GO" id="GO:0010181">
    <property type="term" value="F:FMN binding"/>
    <property type="evidence" value="ECO:0007669"/>
    <property type="project" value="UniProtKB-UniRule"/>
</dbReference>
<dbReference type="GO" id="GO:0016652">
    <property type="term" value="F:oxidoreductase activity, acting on NAD(P)H as acceptor"/>
    <property type="evidence" value="ECO:0007669"/>
    <property type="project" value="UniProtKB-UniRule"/>
</dbReference>
<dbReference type="GO" id="GO:0016655">
    <property type="term" value="F:oxidoreductase activity, acting on NAD(P)H, quinone or similar compound as acceptor"/>
    <property type="evidence" value="ECO:0007669"/>
    <property type="project" value="InterPro"/>
</dbReference>
<dbReference type="FunFam" id="3.40.50.360:FF:000055">
    <property type="entry name" value="FMN-dependent NADH-azoreductase 2"/>
    <property type="match status" value="1"/>
</dbReference>
<dbReference type="Gene3D" id="3.40.50.360">
    <property type="match status" value="1"/>
</dbReference>
<dbReference type="HAMAP" id="MF_01216">
    <property type="entry name" value="Azoreductase_type1"/>
    <property type="match status" value="1"/>
</dbReference>
<dbReference type="InterPro" id="IPR003680">
    <property type="entry name" value="Flavodoxin_fold"/>
</dbReference>
<dbReference type="InterPro" id="IPR029039">
    <property type="entry name" value="Flavoprotein-like_sf"/>
</dbReference>
<dbReference type="InterPro" id="IPR050104">
    <property type="entry name" value="FMN-dep_NADH:Q_OxRdtase_AzoR1"/>
</dbReference>
<dbReference type="InterPro" id="IPR023048">
    <property type="entry name" value="NADH:quinone_OxRdtase_FMN_depd"/>
</dbReference>
<dbReference type="PANTHER" id="PTHR43741">
    <property type="entry name" value="FMN-DEPENDENT NADH-AZOREDUCTASE 1"/>
    <property type="match status" value="1"/>
</dbReference>
<dbReference type="PANTHER" id="PTHR43741:SF7">
    <property type="entry name" value="FMN-DEPENDENT NADH:QUINONE OXIDOREDUCTASE"/>
    <property type="match status" value="1"/>
</dbReference>
<dbReference type="Pfam" id="PF02525">
    <property type="entry name" value="Flavodoxin_2"/>
    <property type="match status" value="1"/>
</dbReference>
<dbReference type="SUPFAM" id="SSF52218">
    <property type="entry name" value="Flavoproteins"/>
    <property type="match status" value="1"/>
</dbReference>
<keyword id="KW-0285">Flavoprotein</keyword>
<keyword id="KW-0288">FMN</keyword>
<keyword id="KW-0520">NAD</keyword>
<keyword id="KW-0560">Oxidoreductase</keyword>
<sequence>MSKVLFIKASPLPNEVSRSSQVAETFMAEYKAKNPSDTVEELVLYNTEVPLLDLELMTAGRELQAGKAFTDLAPDVQKKLNAYNALTEQFLAADKYVFVFPLWNLGIPPLLKAYIDTFVIAGKSFRYTEHGPEALLKDKKAILIHGSGGIYSAGPTSSFTHGEPYLRTILQFIGINVVPSIFVEGIDHNPSKEAEIVAAAKAVAQESAAEF</sequence>
<reference key="1">
    <citation type="journal article" date="2004" name="Nucleic Acids Res.">
        <title>Whole genome comparisons of serotype 4b and 1/2a strains of the food-borne pathogen Listeria monocytogenes reveal new insights into the core genome components of this species.</title>
        <authorList>
            <person name="Nelson K.E."/>
            <person name="Fouts D.E."/>
            <person name="Mongodin E.F."/>
            <person name="Ravel J."/>
            <person name="DeBoy R.T."/>
            <person name="Kolonay J.F."/>
            <person name="Rasko D.A."/>
            <person name="Angiuoli S.V."/>
            <person name="Gill S.R."/>
            <person name="Paulsen I.T."/>
            <person name="Peterson J.D."/>
            <person name="White O."/>
            <person name="Nelson W.C."/>
            <person name="Nierman W.C."/>
            <person name="Beanan M.J."/>
            <person name="Brinkac L.M."/>
            <person name="Daugherty S.C."/>
            <person name="Dodson R.J."/>
            <person name="Durkin A.S."/>
            <person name="Madupu R."/>
            <person name="Haft D.H."/>
            <person name="Selengut J."/>
            <person name="Van Aken S.E."/>
            <person name="Khouri H.M."/>
            <person name="Fedorova N."/>
            <person name="Forberger H.A."/>
            <person name="Tran B."/>
            <person name="Kathariou S."/>
            <person name="Wonderling L.D."/>
            <person name="Uhlich G.A."/>
            <person name="Bayles D.O."/>
            <person name="Luchansky J.B."/>
            <person name="Fraser C.M."/>
        </authorList>
    </citation>
    <scope>NUCLEOTIDE SEQUENCE [LARGE SCALE GENOMIC DNA]</scope>
    <source>
        <strain>F2365</strain>
    </source>
</reference>
<proteinExistence type="inferred from homology"/>
<protein>
    <recommendedName>
        <fullName evidence="1">FMN-dependent NADH:quinone oxidoreductase 2</fullName>
        <ecNumber evidence="1">1.6.5.-</ecNumber>
    </recommendedName>
    <alternativeName>
        <fullName evidence="1">Azo-dye reductase 2</fullName>
    </alternativeName>
    <alternativeName>
        <fullName evidence="1">FMN-dependent NADH-azo compound oxidoreductase 2</fullName>
    </alternativeName>
    <alternativeName>
        <fullName evidence="1">FMN-dependent NADH-azoreductase 2</fullName>
        <ecNumber evidence="1">1.7.1.17</ecNumber>
    </alternativeName>
</protein>
<evidence type="ECO:0000255" key="1">
    <source>
        <dbReference type="HAMAP-Rule" id="MF_01216"/>
    </source>
</evidence>
<feature type="chain" id="PRO_0000166341" description="FMN-dependent NADH:quinone oxidoreductase 2">
    <location>
        <begin position="1"/>
        <end position="211"/>
    </location>
</feature>
<feature type="binding site" evidence="1">
    <location>
        <position position="10"/>
    </location>
    <ligand>
        <name>FMN</name>
        <dbReference type="ChEBI" id="CHEBI:58210"/>
    </ligand>
</feature>
<feature type="binding site" evidence="1">
    <location>
        <begin position="17"/>
        <end position="19"/>
    </location>
    <ligand>
        <name>FMN</name>
        <dbReference type="ChEBI" id="CHEBI:58210"/>
    </ligand>
</feature>
<gene>
    <name evidence="1" type="primary">azoR2</name>
    <name type="ordered locus">LMOf2365_0802</name>
</gene>
<organism>
    <name type="scientific">Listeria monocytogenes serotype 4b (strain F2365)</name>
    <dbReference type="NCBI Taxonomy" id="265669"/>
    <lineage>
        <taxon>Bacteria</taxon>
        <taxon>Bacillati</taxon>
        <taxon>Bacillota</taxon>
        <taxon>Bacilli</taxon>
        <taxon>Bacillales</taxon>
        <taxon>Listeriaceae</taxon>
        <taxon>Listeria</taxon>
    </lineage>
</organism>
<comment type="function">
    <text evidence="1">Quinone reductase that provides resistance to thiol-specific stress caused by electrophilic quinones.</text>
</comment>
<comment type="function">
    <text evidence="1">Also exhibits azoreductase activity. Catalyzes the reductive cleavage of the azo bond in aromatic azo compounds to the corresponding amines.</text>
</comment>
<comment type="catalytic activity">
    <reaction evidence="1">
        <text>2 a quinone + NADH + H(+) = 2 a 1,4-benzosemiquinone + NAD(+)</text>
        <dbReference type="Rhea" id="RHEA:65952"/>
        <dbReference type="ChEBI" id="CHEBI:15378"/>
        <dbReference type="ChEBI" id="CHEBI:57540"/>
        <dbReference type="ChEBI" id="CHEBI:57945"/>
        <dbReference type="ChEBI" id="CHEBI:132124"/>
        <dbReference type="ChEBI" id="CHEBI:134225"/>
    </reaction>
</comment>
<comment type="catalytic activity">
    <reaction evidence="1">
        <text>N,N-dimethyl-1,4-phenylenediamine + anthranilate + 2 NAD(+) = 2-(4-dimethylaminophenyl)diazenylbenzoate + 2 NADH + 2 H(+)</text>
        <dbReference type="Rhea" id="RHEA:55872"/>
        <dbReference type="ChEBI" id="CHEBI:15378"/>
        <dbReference type="ChEBI" id="CHEBI:15783"/>
        <dbReference type="ChEBI" id="CHEBI:16567"/>
        <dbReference type="ChEBI" id="CHEBI:57540"/>
        <dbReference type="ChEBI" id="CHEBI:57945"/>
        <dbReference type="ChEBI" id="CHEBI:71579"/>
        <dbReference type="EC" id="1.7.1.17"/>
    </reaction>
</comment>
<comment type="cofactor">
    <cofactor evidence="1">
        <name>FMN</name>
        <dbReference type="ChEBI" id="CHEBI:58210"/>
    </cofactor>
    <text evidence="1">Binds 1 FMN per subunit.</text>
</comment>
<comment type="subunit">
    <text evidence="1">Homodimer.</text>
</comment>
<comment type="similarity">
    <text evidence="1">Belongs to the azoreductase type 1 family.</text>
</comment>
<name>AZOR2_LISMF</name>